<reference key="1">
    <citation type="journal article" date="2004" name="Science">
        <title>The complete genome sequence of Propionibacterium acnes, a commensal of human skin.</title>
        <authorList>
            <person name="Brueggemann H."/>
            <person name="Henne A."/>
            <person name="Hoster F."/>
            <person name="Liesegang H."/>
            <person name="Wiezer A."/>
            <person name="Strittmatter A."/>
            <person name="Hujer S."/>
            <person name="Duerre P."/>
            <person name="Gottschalk G."/>
        </authorList>
    </citation>
    <scope>NUCLEOTIDE SEQUENCE [LARGE SCALE GENOMIC DNA]</scope>
    <source>
        <strain>DSM 16379 / KPA171202</strain>
    </source>
</reference>
<name>GATB_CUTAK</name>
<proteinExistence type="inferred from homology"/>
<keyword id="KW-0067">ATP-binding</keyword>
<keyword id="KW-0436">Ligase</keyword>
<keyword id="KW-0547">Nucleotide-binding</keyword>
<keyword id="KW-0648">Protein biosynthesis</keyword>
<dbReference type="EC" id="6.3.5.-" evidence="1"/>
<dbReference type="EMBL" id="AE017283">
    <property type="protein sequence ID" value="AAT82872.1"/>
    <property type="molecule type" value="Genomic_DNA"/>
</dbReference>
<dbReference type="RefSeq" id="WP_002516598.1">
    <property type="nucleotide sequence ID" value="NZ_CP025935.1"/>
</dbReference>
<dbReference type="SMR" id="Q6A8P4"/>
<dbReference type="EnsemblBacteria" id="AAT82872">
    <property type="protein sequence ID" value="AAT82872"/>
    <property type="gene ID" value="PPA1124"/>
</dbReference>
<dbReference type="GeneID" id="92857094"/>
<dbReference type="KEGG" id="pac:PPA1124"/>
<dbReference type="eggNOG" id="COG0064">
    <property type="taxonomic scope" value="Bacteria"/>
</dbReference>
<dbReference type="HOGENOM" id="CLU_019240_0_0_11"/>
<dbReference type="Proteomes" id="UP000000603">
    <property type="component" value="Chromosome"/>
</dbReference>
<dbReference type="GO" id="GO:0050566">
    <property type="term" value="F:asparaginyl-tRNA synthase (glutamine-hydrolyzing) activity"/>
    <property type="evidence" value="ECO:0007669"/>
    <property type="project" value="RHEA"/>
</dbReference>
<dbReference type="GO" id="GO:0005524">
    <property type="term" value="F:ATP binding"/>
    <property type="evidence" value="ECO:0007669"/>
    <property type="project" value="UniProtKB-KW"/>
</dbReference>
<dbReference type="GO" id="GO:0050567">
    <property type="term" value="F:glutaminyl-tRNA synthase (glutamine-hydrolyzing) activity"/>
    <property type="evidence" value="ECO:0007669"/>
    <property type="project" value="UniProtKB-UniRule"/>
</dbReference>
<dbReference type="GO" id="GO:0070681">
    <property type="term" value="P:glutaminyl-tRNAGln biosynthesis via transamidation"/>
    <property type="evidence" value="ECO:0007669"/>
    <property type="project" value="TreeGrafter"/>
</dbReference>
<dbReference type="GO" id="GO:0006412">
    <property type="term" value="P:translation"/>
    <property type="evidence" value="ECO:0007669"/>
    <property type="project" value="UniProtKB-UniRule"/>
</dbReference>
<dbReference type="FunFam" id="1.10.10.410:FF:000001">
    <property type="entry name" value="Aspartyl/glutamyl-tRNA(Asn/Gln) amidotransferase subunit B"/>
    <property type="match status" value="1"/>
</dbReference>
<dbReference type="Gene3D" id="1.10.10.410">
    <property type="match status" value="1"/>
</dbReference>
<dbReference type="HAMAP" id="MF_00121">
    <property type="entry name" value="GatB"/>
    <property type="match status" value="1"/>
</dbReference>
<dbReference type="InterPro" id="IPR017959">
    <property type="entry name" value="Asn/Gln-tRNA_amidoTrfase_suB/E"/>
</dbReference>
<dbReference type="InterPro" id="IPR006075">
    <property type="entry name" value="Asn/Gln-tRNA_Trfase_suB/E_cat"/>
</dbReference>
<dbReference type="InterPro" id="IPR018027">
    <property type="entry name" value="Asn/Gln_amidotransferase"/>
</dbReference>
<dbReference type="InterPro" id="IPR003789">
    <property type="entry name" value="Asn/Gln_tRNA_amidoTrase-B-like"/>
</dbReference>
<dbReference type="InterPro" id="IPR004413">
    <property type="entry name" value="GatB"/>
</dbReference>
<dbReference type="InterPro" id="IPR023168">
    <property type="entry name" value="GatB_Yqey_C_2"/>
</dbReference>
<dbReference type="InterPro" id="IPR017958">
    <property type="entry name" value="Gln-tRNA_amidoTrfase_suB_CS"/>
</dbReference>
<dbReference type="InterPro" id="IPR014746">
    <property type="entry name" value="Gln_synth/guanido_kin_cat_dom"/>
</dbReference>
<dbReference type="NCBIfam" id="TIGR00133">
    <property type="entry name" value="gatB"/>
    <property type="match status" value="1"/>
</dbReference>
<dbReference type="NCBIfam" id="NF004012">
    <property type="entry name" value="PRK05477.1-2"/>
    <property type="match status" value="1"/>
</dbReference>
<dbReference type="NCBIfam" id="NF004013">
    <property type="entry name" value="PRK05477.1-3"/>
    <property type="match status" value="1"/>
</dbReference>
<dbReference type="NCBIfam" id="NF004014">
    <property type="entry name" value="PRK05477.1-4"/>
    <property type="match status" value="1"/>
</dbReference>
<dbReference type="PANTHER" id="PTHR11659">
    <property type="entry name" value="GLUTAMYL-TRNA GLN AMIDOTRANSFERASE SUBUNIT B MITOCHONDRIAL AND PROKARYOTIC PET112-RELATED"/>
    <property type="match status" value="1"/>
</dbReference>
<dbReference type="PANTHER" id="PTHR11659:SF0">
    <property type="entry name" value="GLUTAMYL-TRNA(GLN) AMIDOTRANSFERASE SUBUNIT B, MITOCHONDRIAL"/>
    <property type="match status" value="1"/>
</dbReference>
<dbReference type="Pfam" id="PF02934">
    <property type="entry name" value="GatB_N"/>
    <property type="match status" value="1"/>
</dbReference>
<dbReference type="Pfam" id="PF02637">
    <property type="entry name" value="GatB_Yqey"/>
    <property type="match status" value="1"/>
</dbReference>
<dbReference type="SMART" id="SM00845">
    <property type="entry name" value="GatB_Yqey"/>
    <property type="match status" value="1"/>
</dbReference>
<dbReference type="SUPFAM" id="SSF89095">
    <property type="entry name" value="GatB/YqeY motif"/>
    <property type="match status" value="1"/>
</dbReference>
<dbReference type="SUPFAM" id="SSF55931">
    <property type="entry name" value="Glutamine synthetase/guanido kinase"/>
    <property type="match status" value="1"/>
</dbReference>
<dbReference type="PROSITE" id="PS01234">
    <property type="entry name" value="GATB"/>
    <property type="match status" value="1"/>
</dbReference>
<accession>Q6A8P4</accession>
<protein>
    <recommendedName>
        <fullName evidence="1">Aspartyl/glutamyl-tRNA(Asn/Gln) amidotransferase subunit B</fullName>
        <shortName evidence="1">Asp/Glu-ADT subunit B</shortName>
        <ecNumber evidence="1">6.3.5.-</ecNumber>
    </recommendedName>
</protein>
<comment type="function">
    <text evidence="1">Allows the formation of correctly charged Asn-tRNA(Asn) or Gln-tRNA(Gln) through the transamidation of misacylated Asp-tRNA(Asn) or Glu-tRNA(Gln) in organisms which lack either or both of asparaginyl-tRNA or glutaminyl-tRNA synthetases. The reaction takes place in the presence of glutamine and ATP through an activated phospho-Asp-tRNA(Asn) or phospho-Glu-tRNA(Gln).</text>
</comment>
<comment type="catalytic activity">
    <reaction evidence="1">
        <text>L-glutamyl-tRNA(Gln) + L-glutamine + ATP + H2O = L-glutaminyl-tRNA(Gln) + L-glutamate + ADP + phosphate + H(+)</text>
        <dbReference type="Rhea" id="RHEA:17521"/>
        <dbReference type="Rhea" id="RHEA-COMP:9681"/>
        <dbReference type="Rhea" id="RHEA-COMP:9684"/>
        <dbReference type="ChEBI" id="CHEBI:15377"/>
        <dbReference type="ChEBI" id="CHEBI:15378"/>
        <dbReference type="ChEBI" id="CHEBI:29985"/>
        <dbReference type="ChEBI" id="CHEBI:30616"/>
        <dbReference type="ChEBI" id="CHEBI:43474"/>
        <dbReference type="ChEBI" id="CHEBI:58359"/>
        <dbReference type="ChEBI" id="CHEBI:78520"/>
        <dbReference type="ChEBI" id="CHEBI:78521"/>
        <dbReference type="ChEBI" id="CHEBI:456216"/>
    </reaction>
</comment>
<comment type="catalytic activity">
    <reaction evidence="1">
        <text>L-aspartyl-tRNA(Asn) + L-glutamine + ATP + H2O = L-asparaginyl-tRNA(Asn) + L-glutamate + ADP + phosphate + 2 H(+)</text>
        <dbReference type="Rhea" id="RHEA:14513"/>
        <dbReference type="Rhea" id="RHEA-COMP:9674"/>
        <dbReference type="Rhea" id="RHEA-COMP:9677"/>
        <dbReference type="ChEBI" id="CHEBI:15377"/>
        <dbReference type="ChEBI" id="CHEBI:15378"/>
        <dbReference type="ChEBI" id="CHEBI:29985"/>
        <dbReference type="ChEBI" id="CHEBI:30616"/>
        <dbReference type="ChEBI" id="CHEBI:43474"/>
        <dbReference type="ChEBI" id="CHEBI:58359"/>
        <dbReference type="ChEBI" id="CHEBI:78515"/>
        <dbReference type="ChEBI" id="CHEBI:78516"/>
        <dbReference type="ChEBI" id="CHEBI:456216"/>
    </reaction>
</comment>
<comment type="subunit">
    <text evidence="1">Heterotrimer of A, B and C subunits.</text>
</comment>
<comment type="similarity">
    <text evidence="1">Belongs to the GatB/GatE family. GatB subfamily.</text>
</comment>
<organism>
    <name type="scientific">Cutibacterium acnes (strain DSM 16379 / KPA171202)</name>
    <name type="common">Propionibacterium acnes</name>
    <dbReference type="NCBI Taxonomy" id="267747"/>
    <lineage>
        <taxon>Bacteria</taxon>
        <taxon>Bacillati</taxon>
        <taxon>Actinomycetota</taxon>
        <taxon>Actinomycetes</taxon>
        <taxon>Propionibacteriales</taxon>
        <taxon>Propionibacteriaceae</taxon>
        <taxon>Cutibacterium</taxon>
    </lineage>
</organism>
<feature type="chain" id="PRO_0000241256" description="Aspartyl/glutamyl-tRNA(Asn/Gln) amidotransferase subunit B">
    <location>
        <begin position="1"/>
        <end position="497"/>
    </location>
</feature>
<evidence type="ECO:0000255" key="1">
    <source>
        <dbReference type="HAMAP-Rule" id="MF_00121"/>
    </source>
</evidence>
<gene>
    <name evidence="1" type="primary">gatB</name>
    <name type="ordered locus">PPA1124</name>
</gene>
<sequence>MTDELLPYDEVMANYEPVVGLEVHVELSTATKMFCGCSTDTDKDPNTNVCPVCLGLPGSMPAINGHAVESAIRIGLALNCHIAQWCRMARKNYFYPDMTKNYQTSQYDEPICYDGWLDVEADGETFRVEIERAHMEEDAGKSLHVGGSDGRISGASHSLMDYNRAGVPLIEIVTKPIRGLGAKAPQVARAYMAQLRDIMIALGVSEARMERGNLRCDANVSLMPRGSETLGTRTETKNVNSLRSVEGALRYEIQRQGYLLSEGRKVRQQTRMWQEAGEYTIAGRDKSDAEDYRYFPEPDLVPIAPSREWVEQLRAELPELPAAKKARLSSQWQFSEADMTSAVNAGALDLLEATVDAGCQPAAARKWWLTELSRRANEAGVDLAEVGMTPCQVAQLQKLVDDGTLTDKLARQVIDGVIAGEGDPQQVVDGRGLAVVSDDAALGSAVDDVIAANPQIAEKIRGGKVQAAGALIGQIMKVMKGQADAKRVRELILEKLS</sequence>